<protein>
    <recommendedName>
        <fullName>Uncharacterized protein XF_1581/XF_1686</fullName>
    </recommendedName>
</protein>
<organism>
    <name type="scientific">Xylella fastidiosa (strain 9a5c)</name>
    <dbReference type="NCBI Taxonomy" id="160492"/>
    <lineage>
        <taxon>Bacteria</taxon>
        <taxon>Pseudomonadati</taxon>
        <taxon>Pseudomonadota</taxon>
        <taxon>Gammaproteobacteria</taxon>
        <taxon>Lysobacterales</taxon>
        <taxon>Lysobacteraceae</taxon>
        <taxon>Xylella</taxon>
    </lineage>
</organism>
<accession>Q9P9T2</accession>
<reference key="1">
    <citation type="journal article" date="2000" name="Nature">
        <title>The genome sequence of the plant pathogen Xylella fastidiosa.</title>
        <authorList>
            <person name="Simpson A.J.G."/>
            <person name="Reinach F.C."/>
            <person name="Arruda P."/>
            <person name="Abreu F.A."/>
            <person name="Acencio M."/>
            <person name="Alvarenga R."/>
            <person name="Alves L.M.C."/>
            <person name="Araya J.E."/>
            <person name="Baia G.S."/>
            <person name="Baptista C.S."/>
            <person name="Barros M.H."/>
            <person name="Bonaccorsi E.D."/>
            <person name="Bordin S."/>
            <person name="Bove J.M."/>
            <person name="Briones M.R.S."/>
            <person name="Bueno M.R.P."/>
            <person name="Camargo A.A."/>
            <person name="Camargo L.E.A."/>
            <person name="Carraro D.M."/>
            <person name="Carrer H."/>
            <person name="Colauto N.B."/>
            <person name="Colombo C."/>
            <person name="Costa F.F."/>
            <person name="Costa M.C.R."/>
            <person name="Costa-Neto C.M."/>
            <person name="Coutinho L.L."/>
            <person name="Cristofani M."/>
            <person name="Dias-Neto E."/>
            <person name="Docena C."/>
            <person name="El-Dorry H."/>
            <person name="Facincani A.P."/>
            <person name="Ferreira A.J.S."/>
            <person name="Ferreira V.C.A."/>
            <person name="Ferro J.A."/>
            <person name="Fraga J.S."/>
            <person name="Franca S.C."/>
            <person name="Franco M.C."/>
            <person name="Frohme M."/>
            <person name="Furlan L.R."/>
            <person name="Garnier M."/>
            <person name="Goldman G.H."/>
            <person name="Goldman M.H.S."/>
            <person name="Gomes S.L."/>
            <person name="Gruber A."/>
            <person name="Ho P.L."/>
            <person name="Hoheisel J.D."/>
            <person name="Junqueira M.L."/>
            <person name="Kemper E.L."/>
            <person name="Kitajima J.P."/>
            <person name="Krieger J.E."/>
            <person name="Kuramae E.E."/>
            <person name="Laigret F."/>
            <person name="Lambais M.R."/>
            <person name="Leite L.C.C."/>
            <person name="Lemos E.G.M."/>
            <person name="Lemos M.V.F."/>
            <person name="Lopes S.A."/>
            <person name="Lopes C.R."/>
            <person name="Machado J.A."/>
            <person name="Machado M.A."/>
            <person name="Madeira A.M.B.N."/>
            <person name="Madeira H.M.F."/>
            <person name="Marino C.L."/>
            <person name="Marques M.V."/>
            <person name="Martins E.A.L."/>
            <person name="Martins E.M.F."/>
            <person name="Matsukuma A.Y."/>
            <person name="Menck C.F.M."/>
            <person name="Miracca E.C."/>
            <person name="Miyaki C.Y."/>
            <person name="Monteiro-Vitorello C.B."/>
            <person name="Moon D.H."/>
            <person name="Nagai M.A."/>
            <person name="Nascimento A.L.T.O."/>
            <person name="Netto L.E.S."/>
            <person name="Nhani A. Jr."/>
            <person name="Nobrega F.G."/>
            <person name="Nunes L.R."/>
            <person name="Oliveira M.A."/>
            <person name="de Oliveira M.C."/>
            <person name="de Oliveira R.C."/>
            <person name="Palmieri D.A."/>
            <person name="Paris A."/>
            <person name="Peixoto B.R."/>
            <person name="Pereira G.A.G."/>
            <person name="Pereira H.A. Jr."/>
            <person name="Pesquero J.B."/>
            <person name="Quaggio R.B."/>
            <person name="Roberto P.G."/>
            <person name="Rodrigues V."/>
            <person name="de Rosa A.J.M."/>
            <person name="de Rosa V.E. Jr."/>
            <person name="de Sa R.G."/>
            <person name="Santelli R.V."/>
            <person name="Sawasaki H.E."/>
            <person name="da Silva A.C.R."/>
            <person name="da Silva A.M."/>
            <person name="da Silva F.R."/>
            <person name="Silva W.A. Jr."/>
            <person name="da Silveira J.F."/>
            <person name="Silvestri M.L.Z."/>
            <person name="Siqueira W.J."/>
            <person name="de Souza A.A."/>
            <person name="de Souza A.P."/>
            <person name="Terenzi M.F."/>
            <person name="Truffi D."/>
            <person name="Tsai S.M."/>
            <person name="Tsuhako M.H."/>
            <person name="Vallada H."/>
            <person name="Van Sluys M.A."/>
            <person name="Verjovski-Almeida S."/>
            <person name="Vettore A.L."/>
            <person name="Zago M.A."/>
            <person name="Zatz M."/>
            <person name="Meidanis J."/>
            <person name="Setubal J.C."/>
        </authorList>
    </citation>
    <scope>NUCLEOTIDE SEQUENCE [LARGE SCALE GENOMIC DNA]</scope>
    <source>
        <strain>9a5c</strain>
    </source>
</reference>
<gene>
    <name type="ordered locus">XF_1581</name>
</gene>
<gene>
    <name type="ordered locus">XF_1686</name>
</gene>
<dbReference type="EMBL" id="AE003849">
    <property type="protein sequence ID" value="AAF84390.1"/>
    <property type="molecule type" value="Genomic_DNA"/>
</dbReference>
<dbReference type="EMBL" id="AE003849">
    <property type="protein sequence ID" value="AAF84495.1"/>
    <property type="molecule type" value="Genomic_DNA"/>
</dbReference>
<dbReference type="PIR" id="C82665">
    <property type="entry name" value="C82665"/>
</dbReference>
<dbReference type="SMR" id="Q9P9T2"/>
<dbReference type="STRING" id="160492.XF_1581"/>
<dbReference type="KEGG" id="xfa:XF_1581"/>
<dbReference type="KEGG" id="xfa:XF_1686"/>
<dbReference type="eggNOG" id="ENOG50332C9">
    <property type="taxonomic scope" value="Bacteria"/>
</dbReference>
<dbReference type="HOGENOM" id="CLU_162099_0_0_6"/>
<dbReference type="Proteomes" id="UP000000812">
    <property type="component" value="Chromosome"/>
</dbReference>
<proteinExistence type="predicted"/>
<sequence>MRLGMLDLRPIFRNSKLAQRVQVLRRQGQYLPDGTWQQESVLDTVLAIIHPTTPDDLQLLPEGERHHPSKKIMSQDQIDVGDVLLYQDTRWRITQLSNWSEYGYYRGIAVGHDGTAQPAAAAFVTT</sequence>
<feature type="chain" id="PRO_0000220277" description="Uncharacterized protein XF_1581/XF_1686">
    <location>
        <begin position="1"/>
        <end position="126"/>
    </location>
</feature>
<name>Y1581_XYLFA</name>